<gene>
    <name evidence="4 9" type="primary">IGLV3-21</name>
</gene>
<keyword id="KW-1064">Adaptive immunity</keyword>
<keyword id="KW-1003">Cell membrane</keyword>
<keyword id="KW-0903">Direct protein sequencing</keyword>
<keyword id="KW-1015">Disulfide bond</keyword>
<keyword id="KW-0391">Immunity</keyword>
<keyword id="KW-1280">Immunoglobulin</keyword>
<keyword id="KW-0393">Immunoglobulin domain</keyword>
<keyword id="KW-0472">Membrane</keyword>
<keyword id="KW-1267">Proteomics identification</keyword>
<keyword id="KW-1185">Reference proteome</keyword>
<keyword id="KW-0964">Secreted</keyword>
<keyword id="KW-0732">Signal</keyword>
<feature type="signal peptide" evidence="3">
    <location>
        <begin position="1"/>
        <end position="17"/>
    </location>
</feature>
<feature type="chain" id="PRO_0000059843" description="Immunoglobulin lambda variable 3-21" evidence="3">
    <location>
        <begin position="18"/>
        <end position="117"/>
    </location>
</feature>
<feature type="domain" description="Ig-like" evidence="2">
    <location>
        <begin position="18"/>
        <end position="117" status="greater than"/>
    </location>
</feature>
<feature type="region of interest" description="Framework-1" evidence="1">
    <location>
        <begin position="20"/>
        <end position="41"/>
    </location>
</feature>
<feature type="region of interest" description="Complementarity-determining-1" evidence="1">
    <location>
        <begin position="42"/>
        <end position="50"/>
    </location>
</feature>
<feature type="region of interest" description="Framework-2" evidence="1">
    <location>
        <begin position="51"/>
        <end position="67"/>
    </location>
</feature>
<feature type="region of interest" description="Complementarity-determining-2" evidence="1">
    <location>
        <begin position="68"/>
        <end position="70"/>
    </location>
</feature>
<feature type="region of interest" description="Framework-3" evidence="1">
    <location>
        <begin position="71"/>
        <end position="106"/>
    </location>
</feature>
<feature type="region of interest" description="Complementarity-determining-3" evidence="1">
    <location>
        <begin position="107"/>
        <end position="117" status="greater than"/>
    </location>
</feature>
<feature type="disulfide bond" evidence="2">
    <location>
        <begin position="41"/>
        <end position="106"/>
    </location>
</feature>
<feature type="sequence conflict" description="In Ref. 2; AA sequence." evidence="10" ref="2">
    <original>SYV</original>
    <variation>FYE</variation>
    <location>
        <begin position="20"/>
        <end position="22"/>
    </location>
</feature>
<feature type="sequence conflict" description="In Ref. 3; AA sequence." evidence="10" ref="3">
    <original>T</original>
    <variation>S</variation>
    <location>
        <position position="24"/>
    </location>
</feature>
<feature type="sequence conflict" description="In Ref. 2; AA sequence." evidence="10" ref="2">
    <original>VAP</original>
    <variation>LAA</variation>
    <location>
        <begin position="31"/>
        <end position="33"/>
    </location>
</feature>
<feature type="sequence conflict" description="In Ref. 4; AA sequence." evidence="10" ref="4">
    <original>Q</original>
    <variation>E</variation>
    <location>
        <position position="35"/>
    </location>
</feature>
<feature type="sequence conflict" description="In Ref. 2; AA sequence." evidence="10" ref="2">
    <original>R</original>
    <variation>M</variation>
    <location>
        <position position="38"/>
    </location>
</feature>
<feature type="sequence conflict" description="In Ref. 4; AA sequence." evidence="10" ref="4">
    <original>I</original>
    <variation>L</variation>
    <location>
        <position position="39"/>
    </location>
</feature>
<feature type="sequence conflict" description="In Ref. 2; AA sequence." evidence="10" ref="2">
    <original>G</original>
    <variation>E</variation>
    <location>
        <position position="42"/>
    </location>
</feature>
<feature type="sequence conflict" description="In Ref. 4; AA sequence, 3; AA sequence and 2; AA sequence." evidence="10" ref="4 3 2">
    <original>N</original>
    <variation>D</variation>
    <location>
        <position position="45"/>
    </location>
</feature>
<feature type="sequence conflict" description="In Ref. 3; AA sequence." evidence="10" ref="3">
    <original>N</original>
    <variation>G</variation>
    <location>
        <position position="45"/>
    </location>
</feature>
<feature type="sequence conflict" description="In Ref. 2; AA sequence." evidence="10" ref="2">
    <original>SK</original>
    <variation>ER</variation>
    <location>
        <begin position="48"/>
        <end position="49"/>
    </location>
</feature>
<feature type="sequence conflict" description="In Ref. 3; AA sequence." evidence="10" ref="3">
    <original>S</original>
    <variation>G</variation>
    <location>
        <position position="48"/>
    </location>
</feature>
<feature type="sequence conflict" description="In Ref. 4; AA sequence." evidence="10" ref="4">
    <original>K</original>
    <variation>E</variation>
    <location>
        <position position="49"/>
    </location>
</feature>
<feature type="sequence conflict" description="In Ref. 2; AA sequence." evidence="10" ref="2">
    <original>LVV</original>
    <variation>PVI</variation>
    <location>
        <begin position="64"/>
        <end position="66"/>
    </location>
</feature>
<feature type="sequence conflict" description="In Ref. 4; AA sequence." evidence="10" ref="4">
    <original>VYDDS</original>
    <variation>IYFDR</variation>
    <location>
        <begin position="66"/>
        <end position="70"/>
    </location>
</feature>
<feature type="sequence conflict" description="In Ref. 3; AA sequence." evidence="10" ref="3">
    <original>YDDSDRPS</original>
    <variation>HEDNDRPA</variation>
    <location>
        <begin position="67"/>
        <end position="74"/>
    </location>
</feature>
<feature type="sequence conflict" description="In Ref. 2; AA sequence." evidence="10" ref="2">
    <original>S</original>
    <variation>A</variation>
    <location>
        <position position="70"/>
    </location>
</feature>
<feature type="sequence conflict" description="In Ref. 2; AA sequence." evidence="10" ref="2">
    <original>IPE</original>
    <variation>VPA</variation>
    <location>
        <begin position="76"/>
        <end position="78"/>
    </location>
</feature>
<feature type="sequence conflict" description="In Ref. 2; AA sequence." evidence="10" ref="2">
    <original>S</original>
    <variation>Y</variation>
    <location>
        <position position="83"/>
    </location>
</feature>
<feature type="sequence conflict" description="In Ref. 2; AA sequence." evidence="10" ref="2">
    <original>T</original>
    <variation>S</variation>
    <location>
        <position position="88"/>
    </location>
</feature>
<feature type="sequence conflict" description="In Ref. 3; AA sequence." evidence="10" ref="3">
    <original>T</original>
    <variation>A</variation>
    <location>
        <position position="90"/>
    </location>
</feature>
<feature type="sequence conflict" description="In Ref. 3; AA sequence." evidence="10" ref="3">
    <original>T</original>
    <variation>I</variation>
    <location>
        <position position="90"/>
    </location>
</feature>
<feature type="sequence conflict" description="In Ref. 2; AA sequence." evidence="10" ref="2">
    <original>S</original>
    <variation>N</variation>
    <location>
        <position position="94"/>
    </location>
</feature>
<feature type="sequence conflict" description="In Ref. 2; AA sequence." evidence="10" ref="2">
    <original>Y</original>
    <variation>F</variation>
    <location>
        <position position="105"/>
    </location>
</feature>
<feature type="sequence conflict" description="In Ref. 3; AA sequence." evidence="10" ref="3">
    <original>Q</original>
    <variation>E</variation>
    <location>
        <position position="107"/>
    </location>
</feature>
<feature type="sequence conflict" description="In Ref. 4; AA sequence." evidence="10" ref="4">
    <original>V</original>
    <variation>L</variation>
    <location>
        <position position="108"/>
    </location>
</feature>
<feature type="sequence conflict" description="In Ref. 2; AA sequence." evidence="10" ref="2">
    <original>V</original>
    <variation>S</variation>
    <location>
        <position position="108"/>
    </location>
</feature>
<feature type="sequence conflict" description="In Ref. 3; AA sequence." evidence="10" ref="3">
    <original>SSSDHPT</original>
    <variation>DRTAHVV</variation>
    <location>
        <begin position="111"/>
        <end position="117"/>
    </location>
</feature>
<feature type="sequence conflict" description="In Ref. 2; AA sequence." evidence="10" ref="2">
    <original>SSSDHPT</original>
    <variation>NGSYEVV</variation>
    <location>
        <begin position="111"/>
        <end position="117"/>
    </location>
</feature>
<feature type="sequence conflict" description="In Ref. 4; AA sequence." evidence="10" ref="4">
    <original>DHPT</original>
    <variation>EHVV</variation>
    <location>
        <begin position="114"/>
        <end position="117"/>
    </location>
</feature>
<feature type="non-terminal residue">
    <location>
        <position position="117"/>
    </location>
</feature>
<name>LV321_HUMAN</name>
<accession>P80748</accession>
<accession>A0A075B6J7</accession>
<accession>P01719</accession>
<accession>P01720</accession>
<comment type="function">
    <text evidence="5 6 7 8">V region of the variable domain of immunoglobulin light chains that participates in the antigen recognition (PubMed:24600447). Immunoglobulins, also known as antibodies, are membrane-bound or secreted glycoproteins produced by B lymphocytes. In the recognition phase of humoral immunity, the membrane-bound immunoglobulins serve as receptors which, upon binding of a specific antigen, trigger the clonal expansion and differentiation of B lymphocytes into immunoglobulins-secreting plasma cells. Secreted immunoglobulins mediate the effector phase of humoral immunity, which results in the elimination of bound antigens (PubMed:20176268, PubMed:22158414). The antigen binding site is formed by the variable domain of one heavy chain, together with that of its associated light chain. Thus, each immunoglobulin has two antigen binding sites with remarkable affinity for a particular antigen. The variable domains are assembled by a process called V-(D)-J rearrangement and can then be subjected to somatic hypermutations which, after exposure to antigen and selection, allow affinity maturation for a particular antigen (PubMed:17576170, PubMed:20176268).</text>
</comment>
<comment type="subunit">
    <text evidence="6">Immunoglobulins are composed of two identical heavy chains and two identical light chains; disulfide-linked.</text>
</comment>
<comment type="subcellular location">
    <subcellularLocation>
        <location evidence="6 7">Secreted</location>
    </subcellularLocation>
    <subcellularLocation>
        <location evidence="6 7">Cell membrane</location>
    </subcellularLocation>
</comment>
<comment type="polymorphism">
    <text>There are several alleles. The sequence shown is that of IMGT allele IGLV3-21*02.</text>
</comment>
<comment type="caution">
    <text evidence="10">For an example of a full-length immunoglobulin lambda light chain see AC P0DOX8.</text>
</comment>
<proteinExistence type="evidence at protein level"/>
<organism>
    <name type="scientific">Homo sapiens</name>
    <name type="common">Human</name>
    <dbReference type="NCBI Taxonomy" id="9606"/>
    <lineage>
        <taxon>Eukaryota</taxon>
        <taxon>Metazoa</taxon>
        <taxon>Chordata</taxon>
        <taxon>Craniata</taxon>
        <taxon>Vertebrata</taxon>
        <taxon>Euteleostomi</taxon>
        <taxon>Mammalia</taxon>
        <taxon>Eutheria</taxon>
        <taxon>Euarchontoglires</taxon>
        <taxon>Primates</taxon>
        <taxon>Haplorrhini</taxon>
        <taxon>Catarrhini</taxon>
        <taxon>Hominidae</taxon>
        <taxon>Homo</taxon>
    </lineage>
</organism>
<dbReference type="EMBL" id="AC244250">
    <property type="status" value="NOT_ANNOTATED_CDS"/>
    <property type="molecule type" value="Genomic_DNA"/>
</dbReference>
<dbReference type="PIR" id="A01985">
    <property type="entry name" value="L5HUDL"/>
</dbReference>
<dbReference type="PIR" id="A01986">
    <property type="entry name" value="L7HUMT"/>
</dbReference>
<dbReference type="EMDB" id="EMD-14474"/>
<dbReference type="EMDB" id="EMD-14783"/>
<dbReference type="EMDB" id="EMD-23577"/>
<dbReference type="EMDB" id="EMD-23579"/>
<dbReference type="EMDB" id="EMD-28757"/>
<dbReference type="EMDB" id="EMD-38288"/>
<dbReference type="SMR" id="P80748"/>
<dbReference type="FunCoup" id="P80748">
    <property type="interactions" value="475"/>
</dbReference>
<dbReference type="IntAct" id="P80748">
    <property type="interactions" value="2"/>
</dbReference>
<dbReference type="DrugBank" id="DB01593">
    <property type="generic name" value="Zinc"/>
</dbReference>
<dbReference type="DrugBank" id="DB14487">
    <property type="generic name" value="Zinc acetate"/>
</dbReference>
<dbReference type="IMGT_GENE-DB" id="IGLV3-21"/>
<dbReference type="BioMuta" id="IGLV3-21"/>
<dbReference type="DMDM" id="6016518"/>
<dbReference type="jPOST" id="P80748"/>
<dbReference type="MassIVE" id="P80748"/>
<dbReference type="Ensembl" id="ENST00000390308.2">
    <property type="protein sequence ID" value="ENSP00000374843.2"/>
    <property type="gene ID" value="ENSG00000211662.2"/>
</dbReference>
<dbReference type="AGR" id="HGNC:5905"/>
<dbReference type="GeneCards" id="IGLV3-21"/>
<dbReference type="HGNC" id="HGNC:5905">
    <property type="gene designation" value="IGLV3-21"/>
</dbReference>
<dbReference type="HPA" id="ENSG00000211662">
    <property type="expression patterns" value="Tissue enhanced (lymphoid tissue, urinary bladder)"/>
</dbReference>
<dbReference type="neXtProt" id="NX_P80748"/>
<dbReference type="OpenTargets" id="ENSG00000211662"/>
<dbReference type="VEuPathDB" id="HostDB:ENSG00000211662"/>
<dbReference type="GeneTree" id="ENSGT00940000162558"/>
<dbReference type="InParanoid" id="P80748"/>
<dbReference type="OMA" id="MARITCR"/>
<dbReference type="OrthoDB" id="9531984at2759"/>
<dbReference type="PAN-GO" id="P80748">
    <property type="GO annotations" value="3 GO annotations based on evolutionary models"/>
</dbReference>
<dbReference type="PhylomeDB" id="P80748"/>
<dbReference type="PathwayCommons" id="P80748"/>
<dbReference type="Reactome" id="R-HSA-166663">
    <property type="pathway name" value="Initial triggering of complement"/>
</dbReference>
<dbReference type="Reactome" id="R-HSA-173623">
    <property type="pathway name" value="Classical antibody-mediated complement activation"/>
</dbReference>
<dbReference type="Reactome" id="R-HSA-198933">
    <property type="pathway name" value="Immunoregulatory interactions between a Lymphoid and a non-Lymphoid cell"/>
</dbReference>
<dbReference type="Reactome" id="R-HSA-202733">
    <property type="pathway name" value="Cell surface interactions at the vascular wall"/>
</dbReference>
<dbReference type="Reactome" id="R-HSA-2029481">
    <property type="pathway name" value="FCGR activation"/>
</dbReference>
<dbReference type="Reactome" id="R-HSA-2029482">
    <property type="pathway name" value="Regulation of actin dynamics for phagocytic cup formation"/>
</dbReference>
<dbReference type="Reactome" id="R-HSA-2029485">
    <property type="pathway name" value="Role of phospholipids in phagocytosis"/>
</dbReference>
<dbReference type="Reactome" id="R-HSA-2168880">
    <property type="pathway name" value="Scavenging of heme from plasma"/>
</dbReference>
<dbReference type="Reactome" id="R-HSA-2454202">
    <property type="pathway name" value="Fc epsilon receptor (FCERI) signaling"/>
</dbReference>
<dbReference type="Reactome" id="R-HSA-2730905">
    <property type="pathway name" value="Role of LAT2/NTAL/LAB on calcium mobilization"/>
</dbReference>
<dbReference type="Reactome" id="R-HSA-2871796">
    <property type="pathway name" value="FCERI mediated MAPK activation"/>
</dbReference>
<dbReference type="Reactome" id="R-HSA-2871809">
    <property type="pathway name" value="FCERI mediated Ca+2 mobilization"/>
</dbReference>
<dbReference type="Reactome" id="R-HSA-2871837">
    <property type="pathway name" value="FCERI mediated NF-kB activation"/>
</dbReference>
<dbReference type="Reactome" id="R-HSA-5690714">
    <property type="pathway name" value="CD22 mediated BCR regulation"/>
</dbReference>
<dbReference type="Reactome" id="R-HSA-9664323">
    <property type="pathway name" value="FCGR3A-mediated IL10 synthesis"/>
</dbReference>
<dbReference type="Reactome" id="R-HSA-9664422">
    <property type="pathway name" value="FCGR3A-mediated phagocytosis"/>
</dbReference>
<dbReference type="Reactome" id="R-HSA-9679191">
    <property type="pathway name" value="Potential therapeutics for SARS"/>
</dbReference>
<dbReference type="Reactome" id="R-HSA-977606">
    <property type="pathway name" value="Regulation of Complement cascade"/>
</dbReference>
<dbReference type="Reactome" id="R-HSA-983695">
    <property type="pathway name" value="Antigen activates B Cell Receptor (BCR) leading to generation of second messengers"/>
</dbReference>
<dbReference type="SignaLink" id="P80748"/>
<dbReference type="ChiTaRS" id="IGLV3-21">
    <property type="organism name" value="human"/>
</dbReference>
<dbReference type="Pharos" id="P80748">
    <property type="development level" value="Tdark"/>
</dbReference>
<dbReference type="PRO" id="PR:P80748"/>
<dbReference type="Proteomes" id="UP000005640">
    <property type="component" value="Chromosome 22"/>
</dbReference>
<dbReference type="RNAct" id="P80748">
    <property type="molecule type" value="protein"/>
</dbReference>
<dbReference type="Bgee" id="ENSG00000211662">
    <property type="expression patterns" value="Expressed in lymph node and 90 other cell types or tissues"/>
</dbReference>
<dbReference type="GO" id="GO:0072562">
    <property type="term" value="C:blood microparticle"/>
    <property type="evidence" value="ECO:0007005"/>
    <property type="project" value="UniProtKB"/>
</dbReference>
<dbReference type="GO" id="GO:0070062">
    <property type="term" value="C:extracellular exosome"/>
    <property type="evidence" value="ECO:0007005"/>
    <property type="project" value="UniProtKB"/>
</dbReference>
<dbReference type="GO" id="GO:0005576">
    <property type="term" value="C:extracellular region"/>
    <property type="evidence" value="ECO:0000304"/>
    <property type="project" value="Reactome"/>
</dbReference>
<dbReference type="GO" id="GO:0019814">
    <property type="term" value="C:immunoglobulin complex"/>
    <property type="evidence" value="ECO:0000318"/>
    <property type="project" value="GO_Central"/>
</dbReference>
<dbReference type="GO" id="GO:0005886">
    <property type="term" value="C:plasma membrane"/>
    <property type="evidence" value="ECO:0000304"/>
    <property type="project" value="Reactome"/>
</dbReference>
<dbReference type="GO" id="GO:0003823">
    <property type="term" value="F:antigen binding"/>
    <property type="evidence" value="ECO:0000303"/>
    <property type="project" value="UniProtKB"/>
</dbReference>
<dbReference type="GO" id="GO:0002250">
    <property type="term" value="P:adaptive immune response"/>
    <property type="evidence" value="ECO:0007669"/>
    <property type="project" value="UniProtKB-KW"/>
</dbReference>
<dbReference type="GO" id="GO:0006955">
    <property type="term" value="P:immune response"/>
    <property type="evidence" value="ECO:0000318"/>
    <property type="project" value="GO_Central"/>
</dbReference>
<dbReference type="FunFam" id="2.60.40.10:FF:000620">
    <property type="entry name" value="Immunoglobulin lambda locus"/>
    <property type="match status" value="1"/>
</dbReference>
<dbReference type="Gene3D" id="2.60.40.10">
    <property type="entry name" value="Immunoglobulins"/>
    <property type="match status" value="1"/>
</dbReference>
<dbReference type="InterPro" id="IPR007110">
    <property type="entry name" value="Ig-like_dom"/>
</dbReference>
<dbReference type="InterPro" id="IPR036179">
    <property type="entry name" value="Ig-like_dom_sf"/>
</dbReference>
<dbReference type="InterPro" id="IPR013783">
    <property type="entry name" value="Ig-like_fold"/>
</dbReference>
<dbReference type="InterPro" id="IPR003599">
    <property type="entry name" value="Ig_sub"/>
</dbReference>
<dbReference type="InterPro" id="IPR013106">
    <property type="entry name" value="Ig_V-set"/>
</dbReference>
<dbReference type="InterPro" id="IPR050150">
    <property type="entry name" value="IgV_Light_Chain"/>
</dbReference>
<dbReference type="PANTHER" id="PTHR23267">
    <property type="entry name" value="IMMUNOGLOBULIN LIGHT CHAIN"/>
    <property type="match status" value="1"/>
</dbReference>
<dbReference type="Pfam" id="PF07686">
    <property type="entry name" value="V-set"/>
    <property type="match status" value="1"/>
</dbReference>
<dbReference type="SMART" id="SM00409">
    <property type="entry name" value="IG"/>
    <property type="match status" value="1"/>
</dbReference>
<dbReference type="SMART" id="SM00406">
    <property type="entry name" value="IGv"/>
    <property type="match status" value="1"/>
</dbReference>
<dbReference type="SUPFAM" id="SSF48726">
    <property type="entry name" value="Immunoglobulin"/>
    <property type="match status" value="1"/>
</dbReference>
<dbReference type="PROSITE" id="PS50835">
    <property type="entry name" value="IG_LIKE"/>
    <property type="match status" value="1"/>
</dbReference>
<sequence length="117" mass="12446">MAWTVLLLGLLSHCTGSVTSYVLTQPPSVSVAPGQTARITCGGNNIGSKSVHWYQQKPGQAPVLVVYDDSDRPSGIPERFSGSNSGNTATLTISRVEAGDEADYYCQVWDSSSDHPT</sequence>
<evidence type="ECO:0000250" key="1">
    <source>
        <dbReference type="UniProtKB" id="P01721"/>
    </source>
</evidence>
<evidence type="ECO:0000255" key="2">
    <source>
        <dbReference type="PROSITE-ProRule" id="PRU00114"/>
    </source>
</evidence>
<evidence type="ECO:0000269" key="3">
    <source>
    </source>
</evidence>
<evidence type="ECO:0000303" key="4">
    <source>
    </source>
</evidence>
<evidence type="ECO:0000303" key="5">
    <source>
    </source>
</evidence>
<evidence type="ECO:0000303" key="6">
    <source>
    </source>
</evidence>
<evidence type="ECO:0000303" key="7">
    <source>
    </source>
</evidence>
<evidence type="ECO:0000303" key="8">
    <source>
    </source>
</evidence>
<evidence type="ECO:0000303" key="9">
    <source ref="6"/>
</evidence>
<evidence type="ECO:0000305" key="10"/>
<evidence type="ECO:0000305" key="11">
    <source>
    </source>
</evidence>
<evidence type="ECO:0000305" key="12">
    <source>
    </source>
</evidence>
<evidence type="ECO:0000305" key="13">
    <source>
    </source>
</evidence>
<protein>
    <recommendedName>
        <fullName evidence="4 9">Immunoglobulin lambda variable 3-21</fullName>
    </recommendedName>
    <alternativeName>
        <fullName evidence="11">Ig lambda chain V-III region LOI</fullName>
    </alternativeName>
    <alternativeName>
        <fullName evidence="12">Ig lambda chain V-V region DEL</fullName>
    </alternativeName>
    <alternativeName>
        <fullName evidence="13">Ig lambda chain V-VII region MOT</fullName>
    </alternativeName>
</protein>
<reference key="1">
    <citation type="journal article" date="1999" name="Nature">
        <title>The DNA sequence of human chromosome 22.</title>
        <authorList>
            <person name="Dunham I."/>
            <person name="Hunt A.R."/>
            <person name="Collins J.E."/>
            <person name="Bruskiewich R."/>
            <person name="Beare D.M."/>
            <person name="Clamp M."/>
            <person name="Smink L.J."/>
            <person name="Ainscough R."/>
            <person name="Almeida J.P."/>
            <person name="Babbage A.K."/>
            <person name="Bagguley C."/>
            <person name="Bailey J."/>
            <person name="Barlow K.F."/>
            <person name="Bates K.N."/>
            <person name="Beasley O.P."/>
            <person name="Bird C.P."/>
            <person name="Blakey S.E."/>
            <person name="Bridgeman A.M."/>
            <person name="Buck D."/>
            <person name="Burgess J."/>
            <person name="Burrill W.D."/>
            <person name="Burton J."/>
            <person name="Carder C."/>
            <person name="Carter N.P."/>
            <person name="Chen Y."/>
            <person name="Clark G."/>
            <person name="Clegg S.M."/>
            <person name="Cobley V.E."/>
            <person name="Cole C.G."/>
            <person name="Collier R.E."/>
            <person name="Connor R."/>
            <person name="Conroy D."/>
            <person name="Corby N.R."/>
            <person name="Coville G.J."/>
            <person name="Cox A.V."/>
            <person name="Davis J."/>
            <person name="Dawson E."/>
            <person name="Dhami P.D."/>
            <person name="Dockree C."/>
            <person name="Dodsworth S.J."/>
            <person name="Durbin R.M."/>
            <person name="Ellington A.G."/>
            <person name="Evans K.L."/>
            <person name="Fey J.M."/>
            <person name="Fleming K."/>
            <person name="French L."/>
            <person name="Garner A.A."/>
            <person name="Gilbert J.G.R."/>
            <person name="Goward M.E."/>
            <person name="Grafham D.V."/>
            <person name="Griffiths M.N.D."/>
            <person name="Hall C."/>
            <person name="Hall R.E."/>
            <person name="Hall-Tamlyn G."/>
            <person name="Heathcott R.W."/>
            <person name="Ho S."/>
            <person name="Holmes S."/>
            <person name="Hunt S.E."/>
            <person name="Jones M.C."/>
            <person name="Kershaw J."/>
            <person name="Kimberley A.M."/>
            <person name="King A."/>
            <person name="Laird G.K."/>
            <person name="Langford C.F."/>
            <person name="Leversha M.A."/>
            <person name="Lloyd C."/>
            <person name="Lloyd D.M."/>
            <person name="Martyn I.D."/>
            <person name="Mashreghi-Mohammadi M."/>
            <person name="Matthews L.H."/>
            <person name="Mccann O.T."/>
            <person name="Mcclay J."/>
            <person name="Mclaren S."/>
            <person name="McMurray A.A."/>
            <person name="Milne S.A."/>
            <person name="Mortimore B.J."/>
            <person name="Odell C.N."/>
            <person name="Pavitt R."/>
            <person name="Pearce A.V."/>
            <person name="Pearson D."/>
            <person name="Phillimore B.J.C.T."/>
            <person name="Phillips S.H."/>
            <person name="Plumb R.W."/>
            <person name="Ramsay H."/>
            <person name="Ramsey Y."/>
            <person name="Rogers L."/>
            <person name="Ross M.T."/>
            <person name="Scott C.E."/>
            <person name="Sehra H.K."/>
            <person name="Skuce C.D."/>
            <person name="Smalley S."/>
            <person name="Smith M.L."/>
            <person name="Soderlund C."/>
            <person name="Spragon L."/>
            <person name="Steward C.A."/>
            <person name="Sulston J.E."/>
            <person name="Swann R.M."/>
            <person name="Vaudin M."/>
            <person name="Wall M."/>
            <person name="Wallis J.M."/>
            <person name="Whiteley M.N."/>
            <person name="Willey D.L."/>
            <person name="Williams L."/>
            <person name="Williams S.A."/>
            <person name="Williamson H."/>
            <person name="Wilmer T.E."/>
            <person name="Wilming L."/>
            <person name="Wright C.L."/>
            <person name="Hubbard T."/>
            <person name="Bentley D.R."/>
            <person name="Beck S."/>
            <person name="Rogers J."/>
            <person name="Shimizu N."/>
            <person name="Minoshima S."/>
            <person name="Kawasaki K."/>
            <person name="Sasaki T."/>
            <person name="Asakawa S."/>
            <person name="Kudoh J."/>
            <person name="Shintani A."/>
            <person name="Shibuya K."/>
            <person name="Yoshizaki Y."/>
            <person name="Aoki N."/>
            <person name="Mitsuyama S."/>
            <person name="Roe B.A."/>
            <person name="Chen F."/>
            <person name="Chu L."/>
            <person name="Crabtree J."/>
            <person name="Deschamps S."/>
            <person name="Do A."/>
            <person name="Do T."/>
            <person name="Dorman A."/>
            <person name="Fang F."/>
            <person name="Fu Y."/>
            <person name="Hu P."/>
            <person name="Hua A."/>
            <person name="Kenton S."/>
            <person name="Lai H."/>
            <person name="Lao H.I."/>
            <person name="Lewis J."/>
            <person name="Lewis S."/>
            <person name="Lin S.-P."/>
            <person name="Loh P."/>
            <person name="Malaj E."/>
            <person name="Nguyen T."/>
            <person name="Pan H."/>
            <person name="Phan S."/>
            <person name="Qi S."/>
            <person name="Qian Y."/>
            <person name="Ray L."/>
            <person name="Ren Q."/>
            <person name="Shaull S."/>
            <person name="Sloan D."/>
            <person name="Song L."/>
            <person name="Wang Q."/>
            <person name="Wang Y."/>
            <person name="Wang Z."/>
            <person name="White J."/>
            <person name="Willingham D."/>
            <person name="Wu H."/>
            <person name="Yao Z."/>
            <person name="Zhan M."/>
            <person name="Zhang G."/>
            <person name="Chissoe S."/>
            <person name="Murray J."/>
            <person name="Miller N."/>
            <person name="Minx P."/>
            <person name="Fulton R."/>
            <person name="Johnson D."/>
            <person name="Bemis G."/>
            <person name="Bentley D."/>
            <person name="Bradshaw H."/>
            <person name="Bourne S."/>
            <person name="Cordes M."/>
            <person name="Du Z."/>
            <person name="Fulton L."/>
            <person name="Goela D."/>
            <person name="Graves T."/>
            <person name="Hawkins J."/>
            <person name="Hinds K."/>
            <person name="Kemp K."/>
            <person name="Latreille P."/>
            <person name="Layman D."/>
            <person name="Ozersky P."/>
            <person name="Rohlfing T."/>
            <person name="Scheet P."/>
            <person name="Walker C."/>
            <person name="Wamsley A."/>
            <person name="Wohldmann P."/>
            <person name="Pepin K."/>
            <person name="Nelson J."/>
            <person name="Korf I."/>
            <person name="Bedell J.A."/>
            <person name="Hillier L.W."/>
            <person name="Mardis E."/>
            <person name="Waterston R."/>
            <person name="Wilson R."/>
            <person name="Emanuel B.S."/>
            <person name="Shaikh T."/>
            <person name="Kurahashi H."/>
            <person name="Saitta S."/>
            <person name="Budarf M.L."/>
            <person name="McDermid H.E."/>
            <person name="Johnson A."/>
            <person name="Wong A.C.C."/>
            <person name="Morrow B.E."/>
            <person name="Edelmann L."/>
            <person name="Kim U.J."/>
            <person name="Shizuya H."/>
            <person name="Simon M.I."/>
            <person name="Dumanski J.P."/>
            <person name="Peyrard M."/>
            <person name="Kedra D."/>
            <person name="Seroussi E."/>
            <person name="Fransson I."/>
            <person name="Tapia I."/>
            <person name="Bruder C.E."/>
            <person name="O'Brien K.P."/>
            <person name="Wilkinson P."/>
            <person name="Bodenteich A."/>
            <person name="Hartman K."/>
            <person name="Hu X."/>
            <person name="Khan A.S."/>
            <person name="Lane L."/>
            <person name="Tilahun Y."/>
            <person name="Wright H."/>
        </authorList>
    </citation>
    <scope>NUCLEOTIDE SEQUENCE [LARGE SCALE GENOMIC DNA] (IMGT ALLELE IGLV3-21*02)</scope>
</reference>
<reference key="2">
    <citation type="journal article" date="1980" name="Mol. Immunol.">
        <title>Amino acid sequence of the lambda type light chain of a human IgGl myeloma protein (MOT) with unusual antigenicity: a possible new subgroup of lambda chain having a unique N-terminal sequence.</title>
        <authorList>
            <person name="Kojima M."/>
            <person name="Odani S."/>
            <person name="Ikenaka T."/>
        </authorList>
    </citation>
    <scope>PROTEIN SEQUENCE OF 18-117</scope>
</reference>
<reference key="3">
    <citation type="journal article" date="1974" name="Eur. J. Biochem.">
        <title>A new subgroup of human L-chains of the lambda-type. Primary structure of Bence-Jones protein DEL.</title>
        <authorList>
            <person name="Eulitz M."/>
        </authorList>
    </citation>
    <scope>PROTEIN SEQUENCE OF 21-117</scope>
</reference>
<reference key="4">
    <citation type="journal article" date="1999" name="J. Immunol.">
        <title>Nephritogenic lambda light chain dimer: a unique human miniautoantibody against complement factor H.</title>
        <authorList>
            <person name="Jokiranta T.S."/>
            <person name="Solomon A."/>
            <person name="Pangburn M.K."/>
            <person name="Zipfel P.F."/>
            <person name="Meri S."/>
        </authorList>
    </citation>
    <scope>PROTEIN SEQUENCE OF 21-117</scope>
    <scope>3D-STRUCTURE MODELING</scope>
    <source>
        <tissue>Urine</tissue>
    </source>
</reference>
<reference key="5">
    <citation type="journal article" date="2001" name="Exp. Clin. Immunogenet.">
        <title>Nomenclature of the human immunoglobulin lambda (IGL) genes.</title>
        <authorList>
            <person name="Lefranc M.P."/>
        </authorList>
    </citation>
    <scope>NOMENCLATURE</scope>
</reference>
<reference key="6">
    <citation type="book" date="2001" name="The Immunoglobulin FactsBook.">
        <title>The Immunoglobulin FactsBook.</title>
        <editorList>
            <person name="Lefranc M.P."/>
            <person name="Lefranc G."/>
        </editorList>
        <authorList>
            <person name="Lefranc M.P."/>
            <person name="Lefranc G."/>
        </authorList>
    </citation>
    <scope>NOMENCLATURE</scope>
</reference>
<reference key="7">
    <citation type="journal article" date="2007" name="Annu. Rev. Genet.">
        <title>Immunoglobulin somatic hypermutation.</title>
        <authorList>
            <person name="Teng G."/>
            <person name="Papavasiliou F.N."/>
        </authorList>
    </citation>
    <scope>REVIEW ON SOMATIC HYPERMUTATION</scope>
</reference>
<reference key="8">
    <citation type="journal article" date="2010" name="J. Allergy Clin. Immunol.">
        <title>Structure and function of immunoglobulins.</title>
        <authorList>
            <person name="Schroeder H.W. Jr."/>
            <person name="Cavacini L."/>
        </authorList>
    </citation>
    <scope>REVIEW ON IMMUNOGLOBULINS</scope>
</reference>
<reference key="9">
    <citation type="journal article" date="2012" name="Nat. Rev. Immunol.">
        <title>Molecular programming of B cell memory.</title>
        <authorList>
            <person name="McHeyzer-Williams M."/>
            <person name="Okitsu S."/>
            <person name="Wang N."/>
            <person name="McHeyzer-Williams L."/>
        </authorList>
    </citation>
    <scope>REVIEW ON FUNCTION</scope>
</reference>
<reference key="10">
    <citation type="journal article" date="2014" name="Front. Immunol.">
        <title>Immunoglobulin and T Cell Receptor Genes: IMGT((R)) and the Birth and Rise of Immunoinformatics.</title>
        <authorList>
            <person name="Lefranc M.P."/>
        </authorList>
    </citation>
    <scope>NOMENCLATURE</scope>
</reference>